<name>UBID_SHESH</name>
<protein>
    <recommendedName>
        <fullName evidence="1">3-octaprenyl-4-hydroxybenzoate carboxy-lyase</fullName>
        <ecNumber evidence="1">4.1.1.98</ecNumber>
    </recommendedName>
    <alternativeName>
        <fullName evidence="1">Polyprenyl p-hydroxybenzoate decarboxylase</fullName>
    </alternativeName>
</protein>
<proteinExistence type="inferred from homology"/>
<feature type="chain" id="PRO_1000088194" description="3-octaprenyl-4-hydroxybenzoate carboxy-lyase">
    <location>
        <begin position="1"/>
        <end position="493"/>
    </location>
</feature>
<feature type="active site" description="Proton donor" evidence="1">
    <location>
        <position position="287"/>
    </location>
</feature>
<feature type="binding site" evidence="1">
    <location>
        <position position="172"/>
    </location>
    <ligand>
        <name>Mn(2+)</name>
        <dbReference type="ChEBI" id="CHEBI:29035"/>
    </ligand>
</feature>
<feature type="binding site" evidence="1">
    <location>
        <begin position="175"/>
        <end position="177"/>
    </location>
    <ligand>
        <name>prenylated FMN</name>
        <dbReference type="ChEBI" id="CHEBI:87746"/>
    </ligand>
</feature>
<feature type="binding site" evidence="1">
    <location>
        <begin position="189"/>
        <end position="191"/>
    </location>
    <ligand>
        <name>prenylated FMN</name>
        <dbReference type="ChEBI" id="CHEBI:87746"/>
    </ligand>
</feature>
<feature type="binding site" evidence="1">
    <location>
        <begin position="194"/>
        <end position="195"/>
    </location>
    <ligand>
        <name>prenylated FMN</name>
        <dbReference type="ChEBI" id="CHEBI:87746"/>
    </ligand>
</feature>
<feature type="binding site" evidence="1">
    <location>
        <position position="238"/>
    </location>
    <ligand>
        <name>Mn(2+)</name>
        <dbReference type="ChEBI" id="CHEBI:29035"/>
    </ligand>
</feature>
<reference key="1">
    <citation type="submission" date="2007-08" db="EMBL/GenBank/DDBJ databases">
        <title>Complete sequence of Shewanella sediminis HAW-EB3.</title>
        <authorList>
            <consortium name="US DOE Joint Genome Institute"/>
            <person name="Copeland A."/>
            <person name="Lucas S."/>
            <person name="Lapidus A."/>
            <person name="Barry K."/>
            <person name="Glavina del Rio T."/>
            <person name="Dalin E."/>
            <person name="Tice H."/>
            <person name="Pitluck S."/>
            <person name="Chertkov O."/>
            <person name="Brettin T."/>
            <person name="Bruce D."/>
            <person name="Detter J.C."/>
            <person name="Han C."/>
            <person name="Schmutz J."/>
            <person name="Larimer F."/>
            <person name="Land M."/>
            <person name="Hauser L."/>
            <person name="Kyrpides N."/>
            <person name="Kim E."/>
            <person name="Zhao J.-S."/>
            <person name="Richardson P."/>
        </authorList>
    </citation>
    <scope>NUCLEOTIDE SEQUENCE [LARGE SCALE GENOMIC DNA]</scope>
    <source>
        <strain>HAW-EB3</strain>
    </source>
</reference>
<keyword id="KW-1003">Cell membrane</keyword>
<keyword id="KW-0210">Decarboxylase</keyword>
<keyword id="KW-0285">Flavoprotein</keyword>
<keyword id="KW-0288">FMN</keyword>
<keyword id="KW-0456">Lyase</keyword>
<keyword id="KW-0464">Manganese</keyword>
<keyword id="KW-0472">Membrane</keyword>
<keyword id="KW-0479">Metal-binding</keyword>
<keyword id="KW-1185">Reference proteome</keyword>
<keyword id="KW-0831">Ubiquinone biosynthesis</keyword>
<evidence type="ECO:0000255" key="1">
    <source>
        <dbReference type="HAMAP-Rule" id="MF_01636"/>
    </source>
</evidence>
<gene>
    <name evidence="1" type="primary">ubiD</name>
    <name type="ordered locus">Ssed_0505</name>
</gene>
<comment type="function">
    <text evidence="1">Catalyzes the decarboxylation of 3-octaprenyl-4-hydroxy benzoate to 2-octaprenylphenol, an intermediate step in ubiquinone biosynthesis.</text>
</comment>
<comment type="catalytic activity">
    <reaction evidence="1">
        <text>a 4-hydroxy-3-(all-trans-polyprenyl)benzoate + H(+) = a 2-(all-trans-polyprenyl)phenol + CO2</text>
        <dbReference type="Rhea" id="RHEA:41680"/>
        <dbReference type="Rhea" id="RHEA-COMP:9514"/>
        <dbReference type="Rhea" id="RHEA-COMP:9516"/>
        <dbReference type="ChEBI" id="CHEBI:1269"/>
        <dbReference type="ChEBI" id="CHEBI:15378"/>
        <dbReference type="ChEBI" id="CHEBI:16526"/>
        <dbReference type="ChEBI" id="CHEBI:78396"/>
        <dbReference type="EC" id="4.1.1.98"/>
    </reaction>
</comment>
<comment type="cofactor">
    <cofactor evidence="1">
        <name>prenylated FMN</name>
        <dbReference type="ChEBI" id="CHEBI:87746"/>
    </cofactor>
    <text evidence="1">Binds 1 prenylated FMN per subunit.</text>
</comment>
<comment type="cofactor">
    <cofactor evidence="1">
        <name>Mn(2+)</name>
        <dbReference type="ChEBI" id="CHEBI:29035"/>
    </cofactor>
</comment>
<comment type="pathway">
    <text evidence="1">Cofactor biosynthesis; ubiquinone biosynthesis.</text>
</comment>
<comment type="subunit">
    <text evidence="1">Homohexamer.</text>
</comment>
<comment type="subcellular location">
    <subcellularLocation>
        <location evidence="1">Cell membrane</location>
        <topology evidence="1">Peripheral membrane protein</topology>
    </subcellularLocation>
</comment>
<comment type="similarity">
    <text evidence="1">Belongs to the UbiD family.</text>
</comment>
<sequence length="493" mass="55637">MSFKDLRSFISHLEANGELKRISHPVDPHLEMTEIADRVLRAKGPALLFENPVGNEMPVLANLFGTPKRVAMALGKEDPLALREVGELLAFLKEPEPPRGFKDAISKIPMFKQALNMPPKTVRNAPCQEVIKTGSDVDLTKLPIQHCWPGDVAPLVTWGLTITKGPRQKRQNLGIYRQQLLDKDKLIMRWLDHRGGALDFKDFKEKFPGERYPVVVALGADPVTILGAVTPVPDSMSEYAFAGLLRGERTDVCKAISCDLEVPATSEIILEGYIDPEEMAEEGPYGDHTGYYNETDKFPVFTVTHITHRKDAIYHSTYTGRPPDEPAMLGVALNEIFVPILRKQYPEIIDFYLPPEGCSYRMAVISIRKEYPGHAKRVMMGAWSFLRQFMYTKFIIIVDEDVNCRDWNDVIWAITTRMDPKRDTVMIENTPIDYLDFASPVAGLGSKMGMDATNKWEGETDREWGTPIVMDEAVKQRIDTIWDDLGIDDAPTL</sequence>
<dbReference type="EC" id="4.1.1.98" evidence="1"/>
<dbReference type="EMBL" id="CP000821">
    <property type="protein sequence ID" value="ABV35118.1"/>
    <property type="molecule type" value="Genomic_DNA"/>
</dbReference>
<dbReference type="RefSeq" id="WP_012140855.1">
    <property type="nucleotide sequence ID" value="NC_009831.1"/>
</dbReference>
<dbReference type="SMR" id="A8FQJ5"/>
<dbReference type="STRING" id="425104.Ssed_0505"/>
<dbReference type="KEGG" id="sse:Ssed_0505"/>
<dbReference type="eggNOG" id="COG0043">
    <property type="taxonomic scope" value="Bacteria"/>
</dbReference>
<dbReference type="HOGENOM" id="CLU_023348_4_1_6"/>
<dbReference type="OrthoDB" id="9809841at2"/>
<dbReference type="UniPathway" id="UPA00232"/>
<dbReference type="Proteomes" id="UP000002015">
    <property type="component" value="Chromosome"/>
</dbReference>
<dbReference type="GO" id="GO:0005829">
    <property type="term" value="C:cytosol"/>
    <property type="evidence" value="ECO:0007669"/>
    <property type="project" value="TreeGrafter"/>
</dbReference>
<dbReference type="GO" id="GO:0005886">
    <property type="term" value="C:plasma membrane"/>
    <property type="evidence" value="ECO:0007669"/>
    <property type="project" value="UniProtKB-SubCell"/>
</dbReference>
<dbReference type="GO" id="GO:0008694">
    <property type="term" value="F:3-octaprenyl-4-hydroxybenzoate carboxy-lyase activity"/>
    <property type="evidence" value="ECO:0007669"/>
    <property type="project" value="UniProtKB-UniRule"/>
</dbReference>
<dbReference type="GO" id="GO:0046872">
    <property type="term" value="F:metal ion binding"/>
    <property type="evidence" value="ECO:0007669"/>
    <property type="project" value="UniProtKB-KW"/>
</dbReference>
<dbReference type="GO" id="GO:0006744">
    <property type="term" value="P:ubiquinone biosynthetic process"/>
    <property type="evidence" value="ECO:0007669"/>
    <property type="project" value="UniProtKB-UniRule"/>
</dbReference>
<dbReference type="FunFam" id="1.20.5.570:FF:000001">
    <property type="entry name" value="3-octaprenyl-4-hydroxybenzoate carboxy-lyase"/>
    <property type="match status" value="1"/>
</dbReference>
<dbReference type="FunFam" id="3.40.1670.10:FF:000001">
    <property type="entry name" value="3-octaprenyl-4-hydroxybenzoate carboxy-lyase"/>
    <property type="match status" value="1"/>
</dbReference>
<dbReference type="Gene3D" id="1.20.5.570">
    <property type="entry name" value="Single helix bin"/>
    <property type="match status" value="1"/>
</dbReference>
<dbReference type="Gene3D" id="3.40.1670.10">
    <property type="entry name" value="UbiD C-terminal domain-like"/>
    <property type="match status" value="1"/>
</dbReference>
<dbReference type="HAMAP" id="MF_01636">
    <property type="entry name" value="UbiD"/>
    <property type="match status" value="1"/>
</dbReference>
<dbReference type="InterPro" id="IPR002830">
    <property type="entry name" value="UbiD"/>
</dbReference>
<dbReference type="InterPro" id="IPR049381">
    <property type="entry name" value="UbiD-like_C"/>
</dbReference>
<dbReference type="InterPro" id="IPR049383">
    <property type="entry name" value="UbiD-like_N"/>
</dbReference>
<dbReference type="InterPro" id="IPR023677">
    <property type="entry name" value="UbiD_bacteria"/>
</dbReference>
<dbReference type="InterPro" id="IPR048304">
    <property type="entry name" value="UbiD_Rift_dom"/>
</dbReference>
<dbReference type="NCBIfam" id="NF008175">
    <property type="entry name" value="PRK10922.1"/>
    <property type="match status" value="1"/>
</dbReference>
<dbReference type="NCBIfam" id="TIGR00148">
    <property type="entry name" value="UbiD family decarboxylase"/>
    <property type="match status" value="1"/>
</dbReference>
<dbReference type="PANTHER" id="PTHR30108">
    <property type="entry name" value="3-OCTAPRENYL-4-HYDROXYBENZOATE CARBOXY-LYASE-RELATED"/>
    <property type="match status" value="1"/>
</dbReference>
<dbReference type="PANTHER" id="PTHR30108:SF17">
    <property type="entry name" value="FERULIC ACID DECARBOXYLASE 1"/>
    <property type="match status" value="1"/>
</dbReference>
<dbReference type="Pfam" id="PF01977">
    <property type="entry name" value="UbiD"/>
    <property type="match status" value="1"/>
</dbReference>
<dbReference type="Pfam" id="PF20696">
    <property type="entry name" value="UbiD_C"/>
    <property type="match status" value="1"/>
</dbReference>
<dbReference type="Pfam" id="PF20695">
    <property type="entry name" value="UbiD_N"/>
    <property type="match status" value="1"/>
</dbReference>
<dbReference type="SUPFAM" id="SSF50475">
    <property type="entry name" value="FMN-binding split barrel"/>
    <property type="match status" value="1"/>
</dbReference>
<dbReference type="SUPFAM" id="SSF143968">
    <property type="entry name" value="UbiD C-terminal domain-like"/>
    <property type="match status" value="1"/>
</dbReference>
<organism>
    <name type="scientific">Shewanella sediminis (strain HAW-EB3)</name>
    <dbReference type="NCBI Taxonomy" id="425104"/>
    <lineage>
        <taxon>Bacteria</taxon>
        <taxon>Pseudomonadati</taxon>
        <taxon>Pseudomonadota</taxon>
        <taxon>Gammaproteobacteria</taxon>
        <taxon>Alteromonadales</taxon>
        <taxon>Shewanellaceae</taxon>
        <taxon>Shewanella</taxon>
    </lineage>
</organism>
<accession>A8FQJ5</accession>